<comment type="function">
    <text evidence="1">O-methyltransferase that catalyzes the 2 O-methylation steps in the ubiquinone biosynthetic pathway.</text>
</comment>
<comment type="catalytic activity">
    <reaction evidence="1">
        <text>a 3-demethylubiquinol + S-adenosyl-L-methionine = a ubiquinol + S-adenosyl-L-homocysteine + H(+)</text>
        <dbReference type="Rhea" id="RHEA:44380"/>
        <dbReference type="Rhea" id="RHEA-COMP:9566"/>
        <dbReference type="Rhea" id="RHEA-COMP:10914"/>
        <dbReference type="ChEBI" id="CHEBI:15378"/>
        <dbReference type="ChEBI" id="CHEBI:17976"/>
        <dbReference type="ChEBI" id="CHEBI:57856"/>
        <dbReference type="ChEBI" id="CHEBI:59789"/>
        <dbReference type="ChEBI" id="CHEBI:84422"/>
        <dbReference type="EC" id="2.1.1.64"/>
    </reaction>
</comment>
<comment type="catalytic activity">
    <reaction evidence="1">
        <text>a 3-(all-trans-polyprenyl)benzene-1,2-diol + S-adenosyl-L-methionine = a 2-methoxy-6-(all-trans-polyprenyl)phenol + S-adenosyl-L-homocysteine + H(+)</text>
        <dbReference type="Rhea" id="RHEA:31411"/>
        <dbReference type="Rhea" id="RHEA-COMP:9550"/>
        <dbReference type="Rhea" id="RHEA-COMP:9551"/>
        <dbReference type="ChEBI" id="CHEBI:15378"/>
        <dbReference type="ChEBI" id="CHEBI:57856"/>
        <dbReference type="ChEBI" id="CHEBI:59789"/>
        <dbReference type="ChEBI" id="CHEBI:62729"/>
        <dbReference type="ChEBI" id="CHEBI:62731"/>
        <dbReference type="EC" id="2.1.1.222"/>
    </reaction>
</comment>
<comment type="pathway">
    <text evidence="1">Cofactor biosynthesis; ubiquinone biosynthesis.</text>
</comment>
<comment type="similarity">
    <text evidence="1">Belongs to the methyltransferase superfamily. UbiG/COQ3 family.</text>
</comment>
<organism>
    <name type="scientific">Pseudomonas aeruginosa (strain ATCC 15692 / DSM 22644 / CIP 104116 / JCM 14847 / LMG 12228 / 1C / PRS 101 / PAO1)</name>
    <dbReference type="NCBI Taxonomy" id="208964"/>
    <lineage>
        <taxon>Bacteria</taxon>
        <taxon>Pseudomonadati</taxon>
        <taxon>Pseudomonadota</taxon>
        <taxon>Gammaproteobacteria</taxon>
        <taxon>Pseudomonadales</taxon>
        <taxon>Pseudomonadaceae</taxon>
        <taxon>Pseudomonas</taxon>
    </lineage>
</organism>
<evidence type="ECO:0000255" key="1">
    <source>
        <dbReference type="HAMAP-Rule" id="MF_00472"/>
    </source>
</evidence>
<dbReference type="EC" id="2.1.1.222" evidence="1"/>
<dbReference type="EC" id="2.1.1.64" evidence="1"/>
<dbReference type="EMBL" id="AE004091">
    <property type="protein sequence ID" value="AAG06559.1"/>
    <property type="molecule type" value="Genomic_DNA"/>
</dbReference>
<dbReference type="PIR" id="C83249">
    <property type="entry name" value="C83249"/>
</dbReference>
<dbReference type="RefSeq" id="NP_251861.1">
    <property type="nucleotide sequence ID" value="NC_002516.2"/>
</dbReference>
<dbReference type="RefSeq" id="WP_003113434.1">
    <property type="nucleotide sequence ID" value="NZ_QZGE01000023.1"/>
</dbReference>
<dbReference type="SMR" id="Q9HZ63"/>
<dbReference type="FunCoup" id="Q9HZ63">
    <property type="interactions" value="561"/>
</dbReference>
<dbReference type="STRING" id="208964.PA3171"/>
<dbReference type="PaxDb" id="208964-PA3171"/>
<dbReference type="DNASU" id="882673"/>
<dbReference type="GeneID" id="882673"/>
<dbReference type="KEGG" id="pae:PA3171"/>
<dbReference type="PATRIC" id="fig|208964.12.peg.3314"/>
<dbReference type="PseudoCAP" id="PA3171"/>
<dbReference type="HOGENOM" id="CLU_042432_5_0_6"/>
<dbReference type="InParanoid" id="Q9HZ63"/>
<dbReference type="OrthoDB" id="9801538at2"/>
<dbReference type="PhylomeDB" id="Q9HZ63"/>
<dbReference type="BioCyc" id="PAER208964:G1FZ6-3231-MONOMER"/>
<dbReference type="UniPathway" id="UPA00232"/>
<dbReference type="Proteomes" id="UP000002438">
    <property type="component" value="Chromosome"/>
</dbReference>
<dbReference type="GO" id="GO:0102208">
    <property type="term" value="F:2-polyprenyl-6-hydroxyphenol methylase activity"/>
    <property type="evidence" value="ECO:0007669"/>
    <property type="project" value="UniProtKB-EC"/>
</dbReference>
<dbReference type="GO" id="GO:0061542">
    <property type="term" value="F:3-demethylubiquinol 3-O-methyltransferase activity"/>
    <property type="evidence" value="ECO:0007669"/>
    <property type="project" value="UniProtKB-UniRule"/>
</dbReference>
<dbReference type="GO" id="GO:0008168">
    <property type="term" value="F:methyltransferase activity"/>
    <property type="evidence" value="ECO:0000318"/>
    <property type="project" value="GO_Central"/>
</dbReference>
<dbReference type="GO" id="GO:0010420">
    <property type="term" value="F:polyprenyldihydroxybenzoate methyltransferase activity"/>
    <property type="evidence" value="ECO:0007669"/>
    <property type="project" value="InterPro"/>
</dbReference>
<dbReference type="GO" id="GO:0032259">
    <property type="term" value="P:methylation"/>
    <property type="evidence" value="ECO:0007669"/>
    <property type="project" value="UniProtKB-KW"/>
</dbReference>
<dbReference type="CDD" id="cd02440">
    <property type="entry name" value="AdoMet_MTases"/>
    <property type="match status" value="1"/>
</dbReference>
<dbReference type="FunFam" id="3.40.50.150:FF:000028">
    <property type="entry name" value="Ubiquinone biosynthesis O-methyltransferase"/>
    <property type="match status" value="1"/>
</dbReference>
<dbReference type="Gene3D" id="3.40.50.150">
    <property type="entry name" value="Vaccinia Virus protein VP39"/>
    <property type="match status" value="1"/>
</dbReference>
<dbReference type="HAMAP" id="MF_00472">
    <property type="entry name" value="UbiG"/>
    <property type="match status" value="1"/>
</dbReference>
<dbReference type="InterPro" id="IPR029063">
    <property type="entry name" value="SAM-dependent_MTases_sf"/>
</dbReference>
<dbReference type="InterPro" id="IPR010233">
    <property type="entry name" value="UbiG_MeTrfase"/>
</dbReference>
<dbReference type="NCBIfam" id="TIGR01983">
    <property type="entry name" value="UbiG"/>
    <property type="match status" value="1"/>
</dbReference>
<dbReference type="PANTHER" id="PTHR43464">
    <property type="entry name" value="METHYLTRANSFERASE"/>
    <property type="match status" value="1"/>
</dbReference>
<dbReference type="PANTHER" id="PTHR43464:SF19">
    <property type="entry name" value="UBIQUINONE BIOSYNTHESIS O-METHYLTRANSFERASE, MITOCHONDRIAL"/>
    <property type="match status" value="1"/>
</dbReference>
<dbReference type="Pfam" id="PF13489">
    <property type="entry name" value="Methyltransf_23"/>
    <property type="match status" value="1"/>
</dbReference>
<dbReference type="SUPFAM" id="SSF53335">
    <property type="entry name" value="S-adenosyl-L-methionine-dependent methyltransferases"/>
    <property type="match status" value="1"/>
</dbReference>
<accession>Q9HZ63</accession>
<reference key="1">
    <citation type="journal article" date="2000" name="Nature">
        <title>Complete genome sequence of Pseudomonas aeruginosa PAO1, an opportunistic pathogen.</title>
        <authorList>
            <person name="Stover C.K."/>
            <person name="Pham X.-Q.T."/>
            <person name="Erwin A.L."/>
            <person name="Mizoguchi S.D."/>
            <person name="Warrener P."/>
            <person name="Hickey M.J."/>
            <person name="Brinkman F.S.L."/>
            <person name="Hufnagle W.O."/>
            <person name="Kowalik D.J."/>
            <person name="Lagrou M."/>
            <person name="Garber R.L."/>
            <person name="Goltry L."/>
            <person name="Tolentino E."/>
            <person name="Westbrock-Wadman S."/>
            <person name="Yuan Y."/>
            <person name="Brody L.L."/>
            <person name="Coulter S.N."/>
            <person name="Folger K.R."/>
            <person name="Kas A."/>
            <person name="Larbig K."/>
            <person name="Lim R.M."/>
            <person name="Smith K.A."/>
            <person name="Spencer D.H."/>
            <person name="Wong G.K.-S."/>
            <person name="Wu Z."/>
            <person name="Paulsen I.T."/>
            <person name="Reizer J."/>
            <person name="Saier M.H. Jr."/>
            <person name="Hancock R.E.W."/>
            <person name="Lory S."/>
            <person name="Olson M.V."/>
        </authorList>
    </citation>
    <scope>NUCLEOTIDE SEQUENCE [LARGE SCALE GENOMIC DNA]</scope>
    <source>
        <strain>ATCC 15692 / DSM 22644 / CIP 104116 / JCM 14847 / LMG 12228 / 1C / PRS 101 / PAO1</strain>
    </source>
</reference>
<protein>
    <recommendedName>
        <fullName evidence="1">Ubiquinone biosynthesis O-methyltransferase</fullName>
    </recommendedName>
    <alternativeName>
        <fullName evidence="1">2-polyprenyl-6-hydroxyphenol methylase</fullName>
        <ecNumber evidence="1">2.1.1.222</ecNumber>
    </alternativeName>
    <alternativeName>
        <fullName evidence="1">3-demethylubiquinone 3-O-methyltransferase</fullName>
        <ecNumber evidence="1">2.1.1.64</ecNumber>
    </alternativeName>
</protein>
<sequence length="232" mass="25860">MSNVDHAEIAKFEALAHRWWDRESEFKPLHDINPLRVNWIDERAGLAGKKVLDIGCGGGILSEAMAQRGASVTGIDMGEAPLAVARLHQLESGVAVDYRQITAEQMAEEMPGQFDVVTCLEMLEHVPDPASVIRACHRLVKPGGQVFLSTINRNPKAYLFAVIGAEYILQLLPRGTHDFRKFIRPSELGAWSREAGLEVKDIIGLTYNPLTKHYKLANDVDVNYMVQTKREA</sequence>
<gene>
    <name evidence="1" type="primary">ubiG</name>
    <name type="ordered locus">PA3171</name>
</gene>
<proteinExistence type="inferred from homology"/>
<keyword id="KW-0489">Methyltransferase</keyword>
<keyword id="KW-1185">Reference proteome</keyword>
<keyword id="KW-0949">S-adenosyl-L-methionine</keyword>
<keyword id="KW-0808">Transferase</keyword>
<keyword id="KW-0831">Ubiquinone biosynthesis</keyword>
<feature type="chain" id="PRO_0000193391" description="Ubiquinone biosynthesis O-methyltransferase">
    <location>
        <begin position="1"/>
        <end position="232"/>
    </location>
</feature>
<feature type="binding site" evidence="1">
    <location>
        <position position="36"/>
    </location>
    <ligand>
        <name>S-adenosyl-L-methionine</name>
        <dbReference type="ChEBI" id="CHEBI:59789"/>
    </ligand>
</feature>
<feature type="binding site" evidence="1">
    <location>
        <position position="55"/>
    </location>
    <ligand>
        <name>S-adenosyl-L-methionine</name>
        <dbReference type="ChEBI" id="CHEBI:59789"/>
    </ligand>
</feature>
<feature type="binding site" evidence="1">
    <location>
        <position position="76"/>
    </location>
    <ligand>
        <name>S-adenosyl-L-methionine</name>
        <dbReference type="ChEBI" id="CHEBI:59789"/>
    </ligand>
</feature>
<feature type="binding site" evidence="1">
    <location>
        <position position="120"/>
    </location>
    <ligand>
        <name>S-adenosyl-L-methionine</name>
        <dbReference type="ChEBI" id="CHEBI:59789"/>
    </ligand>
</feature>
<name>UBIG_PSEAE</name>